<comment type="function">
    <text evidence="1">An essential GTPase which binds GTP, GDP and possibly (p)ppGpp with moderate affinity, with high nucleotide exchange rates and a fairly low GTP hydrolysis rate. Plays a role in control of the cell cycle, stress response, ribosome biogenesis and in those bacteria that undergo differentiation, in morphogenesis control.</text>
</comment>
<comment type="cofactor">
    <cofactor evidence="1">
        <name>Mg(2+)</name>
        <dbReference type="ChEBI" id="CHEBI:18420"/>
    </cofactor>
</comment>
<comment type="subunit">
    <text evidence="1">Monomer.</text>
</comment>
<comment type="subcellular location">
    <subcellularLocation>
        <location evidence="1">Cytoplasm</location>
    </subcellularLocation>
</comment>
<comment type="similarity">
    <text evidence="1">Belongs to the TRAFAC class OBG-HflX-like GTPase superfamily. OBG GTPase family.</text>
</comment>
<gene>
    <name evidence="1" type="primary">obg</name>
    <name type="ordered locus">Sare_3858</name>
</gene>
<evidence type="ECO:0000255" key="1">
    <source>
        <dbReference type="HAMAP-Rule" id="MF_01454"/>
    </source>
</evidence>
<evidence type="ECO:0000255" key="2">
    <source>
        <dbReference type="PROSITE-ProRule" id="PRU01229"/>
    </source>
</evidence>
<evidence type="ECO:0000255" key="3">
    <source>
        <dbReference type="PROSITE-ProRule" id="PRU01231"/>
    </source>
</evidence>
<evidence type="ECO:0000256" key="4">
    <source>
        <dbReference type="SAM" id="MobiDB-lite"/>
    </source>
</evidence>
<feature type="chain" id="PRO_0000386217" description="GTPase Obg">
    <location>
        <begin position="1"/>
        <end position="481"/>
    </location>
</feature>
<feature type="domain" description="Obg" evidence="3">
    <location>
        <begin position="2"/>
        <end position="159"/>
    </location>
</feature>
<feature type="domain" description="OBG-type G" evidence="1">
    <location>
        <begin position="160"/>
        <end position="330"/>
    </location>
</feature>
<feature type="domain" description="OCT" evidence="2">
    <location>
        <begin position="348"/>
        <end position="426"/>
    </location>
</feature>
<feature type="region of interest" description="Disordered" evidence="4">
    <location>
        <begin position="440"/>
        <end position="481"/>
    </location>
</feature>
<feature type="compositionally biased region" description="Acidic residues" evidence="4">
    <location>
        <begin position="469"/>
        <end position="481"/>
    </location>
</feature>
<feature type="binding site" evidence="1">
    <location>
        <begin position="166"/>
        <end position="173"/>
    </location>
    <ligand>
        <name>GTP</name>
        <dbReference type="ChEBI" id="CHEBI:37565"/>
    </ligand>
</feature>
<feature type="binding site" evidence="1">
    <location>
        <position position="173"/>
    </location>
    <ligand>
        <name>Mg(2+)</name>
        <dbReference type="ChEBI" id="CHEBI:18420"/>
    </ligand>
</feature>
<feature type="binding site" evidence="1">
    <location>
        <begin position="191"/>
        <end position="195"/>
    </location>
    <ligand>
        <name>GTP</name>
        <dbReference type="ChEBI" id="CHEBI:37565"/>
    </ligand>
</feature>
<feature type="binding site" evidence="1">
    <location>
        <position position="193"/>
    </location>
    <ligand>
        <name>Mg(2+)</name>
        <dbReference type="ChEBI" id="CHEBI:18420"/>
    </ligand>
</feature>
<feature type="binding site" evidence="1">
    <location>
        <begin position="212"/>
        <end position="215"/>
    </location>
    <ligand>
        <name>GTP</name>
        <dbReference type="ChEBI" id="CHEBI:37565"/>
    </ligand>
</feature>
<feature type="binding site" evidence="1">
    <location>
        <begin position="282"/>
        <end position="285"/>
    </location>
    <ligand>
        <name>GTP</name>
        <dbReference type="ChEBI" id="CHEBI:37565"/>
    </ligand>
</feature>
<feature type="binding site" evidence="1">
    <location>
        <begin position="311"/>
        <end position="313"/>
    </location>
    <ligand>
        <name>GTP</name>
        <dbReference type="ChEBI" id="CHEBI:37565"/>
    </ligand>
</feature>
<keyword id="KW-0963">Cytoplasm</keyword>
<keyword id="KW-0342">GTP-binding</keyword>
<keyword id="KW-0378">Hydrolase</keyword>
<keyword id="KW-0460">Magnesium</keyword>
<keyword id="KW-0479">Metal-binding</keyword>
<keyword id="KW-0547">Nucleotide-binding</keyword>
<organism>
    <name type="scientific">Salinispora arenicola (strain CNS-205)</name>
    <dbReference type="NCBI Taxonomy" id="391037"/>
    <lineage>
        <taxon>Bacteria</taxon>
        <taxon>Bacillati</taxon>
        <taxon>Actinomycetota</taxon>
        <taxon>Actinomycetes</taxon>
        <taxon>Micromonosporales</taxon>
        <taxon>Micromonosporaceae</taxon>
        <taxon>Salinispora</taxon>
    </lineage>
</organism>
<protein>
    <recommendedName>
        <fullName evidence="1">GTPase Obg</fullName>
        <ecNumber evidence="1">3.6.5.-</ecNumber>
    </recommendedName>
    <alternativeName>
        <fullName evidence="1">GTP-binding protein Obg</fullName>
    </alternativeName>
</protein>
<dbReference type="EC" id="3.6.5.-" evidence="1"/>
<dbReference type="EMBL" id="CP000850">
    <property type="protein sequence ID" value="ABV99650.1"/>
    <property type="molecule type" value="Genomic_DNA"/>
</dbReference>
<dbReference type="SMR" id="A8M0Y9"/>
<dbReference type="STRING" id="391037.Sare_3858"/>
<dbReference type="KEGG" id="saq:Sare_3858"/>
<dbReference type="PATRIC" id="fig|391037.6.peg.3887"/>
<dbReference type="eggNOG" id="COG0536">
    <property type="taxonomic scope" value="Bacteria"/>
</dbReference>
<dbReference type="HOGENOM" id="CLU_011747_2_1_11"/>
<dbReference type="OrthoDB" id="9807318at2"/>
<dbReference type="GO" id="GO:0005737">
    <property type="term" value="C:cytoplasm"/>
    <property type="evidence" value="ECO:0007669"/>
    <property type="project" value="UniProtKB-SubCell"/>
</dbReference>
<dbReference type="GO" id="GO:0005525">
    <property type="term" value="F:GTP binding"/>
    <property type="evidence" value="ECO:0007669"/>
    <property type="project" value="UniProtKB-UniRule"/>
</dbReference>
<dbReference type="GO" id="GO:0003924">
    <property type="term" value="F:GTPase activity"/>
    <property type="evidence" value="ECO:0007669"/>
    <property type="project" value="UniProtKB-UniRule"/>
</dbReference>
<dbReference type="GO" id="GO:0000287">
    <property type="term" value="F:magnesium ion binding"/>
    <property type="evidence" value="ECO:0007669"/>
    <property type="project" value="InterPro"/>
</dbReference>
<dbReference type="GO" id="GO:0042254">
    <property type="term" value="P:ribosome biogenesis"/>
    <property type="evidence" value="ECO:0007669"/>
    <property type="project" value="UniProtKB-UniRule"/>
</dbReference>
<dbReference type="CDD" id="cd01898">
    <property type="entry name" value="Obg"/>
    <property type="match status" value="1"/>
</dbReference>
<dbReference type="FunFam" id="2.70.210.12:FF:000001">
    <property type="entry name" value="GTPase Obg"/>
    <property type="match status" value="1"/>
</dbReference>
<dbReference type="Gene3D" id="3.30.300.350">
    <property type="entry name" value="GTP-binding protein OBG, C-terminal domain"/>
    <property type="match status" value="1"/>
</dbReference>
<dbReference type="Gene3D" id="2.70.210.12">
    <property type="entry name" value="GTP1/OBG domain"/>
    <property type="match status" value="1"/>
</dbReference>
<dbReference type="Gene3D" id="3.40.50.300">
    <property type="entry name" value="P-loop containing nucleotide triphosphate hydrolases"/>
    <property type="match status" value="1"/>
</dbReference>
<dbReference type="HAMAP" id="MF_01454">
    <property type="entry name" value="GTPase_Obg"/>
    <property type="match status" value="1"/>
</dbReference>
<dbReference type="InterPro" id="IPR031167">
    <property type="entry name" value="G_OBG"/>
</dbReference>
<dbReference type="InterPro" id="IPR006073">
    <property type="entry name" value="GTP-bd"/>
</dbReference>
<dbReference type="InterPro" id="IPR014100">
    <property type="entry name" value="GTP-bd_Obg/CgtA"/>
</dbReference>
<dbReference type="InterPro" id="IPR036346">
    <property type="entry name" value="GTP-bd_prot_GTP1/OBG_C_sf"/>
</dbReference>
<dbReference type="InterPro" id="IPR006074">
    <property type="entry name" value="GTP1-OBG_CS"/>
</dbReference>
<dbReference type="InterPro" id="IPR006169">
    <property type="entry name" value="GTP1_OBG_dom"/>
</dbReference>
<dbReference type="InterPro" id="IPR036726">
    <property type="entry name" value="GTP1_OBG_dom_sf"/>
</dbReference>
<dbReference type="InterPro" id="IPR045086">
    <property type="entry name" value="OBG_GTPase"/>
</dbReference>
<dbReference type="InterPro" id="IPR015349">
    <property type="entry name" value="OCT_dom"/>
</dbReference>
<dbReference type="InterPro" id="IPR027417">
    <property type="entry name" value="P-loop_NTPase"/>
</dbReference>
<dbReference type="InterPro" id="IPR005225">
    <property type="entry name" value="Small_GTP-bd"/>
</dbReference>
<dbReference type="NCBIfam" id="TIGR02729">
    <property type="entry name" value="Obg_CgtA"/>
    <property type="match status" value="1"/>
</dbReference>
<dbReference type="NCBIfam" id="TIGR03595">
    <property type="entry name" value="Obg_CgtA_exten"/>
    <property type="match status" value="1"/>
</dbReference>
<dbReference type="NCBIfam" id="NF008954">
    <property type="entry name" value="PRK12296.1"/>
    <property type="match status" value="1"/>
</dbReference>
<dbReference type="NCBIfam" id="NF008955">
    <property type="entry name" value="PRK12297.1"/>
    <property type="match status" value="1"/>
</dbReference>
<dbReference type="NCBIfam" id="NF008956">
    <property type="entry name" value="PRK12299.1"/>
    <property type="match status" value="1"/>
</dbReference>
<dbReference type="NCBIfam" id="TIGR00231">
    <property type="entry name" value="small_GTP"/>
    <property type="match status" value="1"/>
</dbReference>
<dbReference type="PANTHER" id="PTHR11702">
    <property type="entry name" value="DEVELOPMENTALLY REGULATED GTP-BINDING PROTEIN-RELATED"/>
    <property type="match status" value="1"/>
</dbReference>
<dbReference type="PANTHER" id="PTHR11702:SF31">
    <property type="entry name" value="MITOCHONDRIAL RIBOSOME-ASSOCIATED GTPASE 2"/>
    <property type="match status" value="1"/>
</dbReference>
<dbReference type="Pfam" id="PF09269">
    <property type="entry name" value="DUF1967"/>
    <property type="match status" value="1"/>
</dbReference>
<dbReference type="Pfam" id="PF01018">
    <property type="entry name" value="GTP1_OBG"/>
    <property type="match status" value="1"/>
</dbReference>
<dbReference type="Pfam" id="PF01926">
    <property type="entry name" value="MMR_HSR1"/>
    <property type="match status" value="1"/>
</dbReference>
<dbReference type="PRINTS" id="PR00326">
    <property type="entry name" value="GTP1OBG"/>
</dbReference>
<dbReference type="SUPFAM" id="SSF102741">
    <property type="entry name" value="Obg GTP-binding protein C-terminal domain"/>
    <property type="match status" value="1"/>
</dbReference>
<dbReference type="SUPFAM" id="SSF82051">
    <property type="entry name" value="Obg GTP-binding protein N-terminal domain"/>
    <property type="match status" value="1"/>
</dbReference>
<dbReference type="SUPFAM" id="SSF52540">
    <property type="entry name" value="P-loop containing nucleoside triphosphate hydrolases"/>
    <property type="match status" value="1"/>
</dbReference>
<dbReference type="PROSITE" id="PS51710">
    <property type="entry name" value="G_OBG"/>
    <property type="match status" value="1"/>
</dbReference>
<dbReference type="PROSITE" id="PS00905">
    <property type="entry name" value="GTP1_OBG"/>
    <property type="match status" value="1"/>
</dbReference>
<dbReference type="PROSITE" id="PS51883">
    <property type="entry name" value="OBG"/>
    <property type="match status" value="1"/>
</dbReference>
<dbReference type="PROSITE" id="PS51881">
    <property type="entry name" value="OCT"/>
    <property type="match status" value="1"/>
</dbReference>
<accession>A8M0Y9</accession>
<sequence>MTTFVDRVVLHLQAGDGGHGCVSIHREKFKPFGGPDGGNGGHGGSVSLVVDPQVHTLLDFHFRPHVKASNGKGGAGSNRDGANGADLVLRVPNGTVVQTTGGTVLADLVGAGTTFEVARGGRGGRGNAALANARRKAPGFAELGEPGDKLDAVLELKSVADIGLVGYPSAGKSSLISVISAAKPKIADYPFTTLVPNLGVVRVDNHTFTVADVPGLIPGAATGKGLGLEFLRHVERCAVLVHVVDTATLETARDPVADIDAIEAELTAYGGLADRPRLVALNKIDVPDGRDLAEIVRPDLEARGFRVFEVSAATREGLKELMFAMGELVAAARAAAPPVEPTRIVIRPKAVDDAGFTVEAAPDGAWVVRGTRPERWIRQTNFDNEEAVGYLADRLARLGVEEKLGKAGAQAGDLVRIGEREFDWHPTLYAEFVPGVRGGDQRLAEKTQRPSAAERLAARKARRQRPGDEPESDELDGDSGE</sequence>
<name>OBG_SALAI</name>
<proteinExistence type="inferred from homology"/>
<reference key="1">
    <citation type="submission" date="2007-10" db="EMBL/GenBank/DDBJ databases">
        <title>Complete sequence of Salinispora arenicola CNS-205.</title>
        <authorList>
            <consortium name="US DOE Joint Genome Institute"/>
            <person name="Copeland A."/>
            <person name="Lucas S."/>
            <person name="Lapidus A."/>
            <person name="Barry K."/>
            <person name="Glavina del Rio T."/>
            <person name="Dalin E."/>
            <person name="Tice H."/>
            <person name="Pitluck S."/>
            <person name="Foster B."/>
            <person name="Schmutz J."/>
            <person name="Larimer F."/>
            <person name="Land M."/>
            <person name="Hauser L."/>
            <person name="Kyrpides N."/>
            <person name="Ivanova N."/>
            <person name="Jensen P.R."/>
            <person name="Moore B.S."/>
            <person name="Penn K."/>
            <person name="Jenkins C."/>
            <person name="Udwary D."/>
            <person name="Xiang L."/>
            <person name="Gontang E."/>
            <person name="Richardson P."/>
        </authorList>
    </citation>
    <scope>NUCLEOTIDE SEQUENCE [LARGE SCALE GENOMIC DNA]</scope>
    <source>
        <strain>CNS-205</strain>
    </source>
</reference>